<sequence>MNEASERPNHFIRHIIEEDLAQGKHSFIRTRFPPEPNGYLHIGHAKSICLNFGLAQDYQGECHLRFDDTNPEKEEQEYIESIKRDVQWLGFAWSGAVRYSSDYFESLYGYAIELIQKELAYVDELNAEQMREYRGTLTAPGKNSPFRDRTVEDNIELFKKMRAGGFAEGAACLRAKIDMASPFMIMRDPVLYRIKFAEHHQLGDQWCIYPMYDFTHCISDALEGITHSLCTLEFQDNRRLYDWVLENISIDCHPRQYEFSRLNLEHTLMSKRKLHLLVKEKKVTGWDDPRMPTLSGLKRRGYTPASIREFCHRIGVTKQDNQVEMSALEACIREDLNQNAPRALAVLDPVQLIIDNRSDEKEWLTVPNHPNNPGMGHRQMPFNRVLYIDRADFREEANKKYKRLVLGKEVRLRHAYVVKAKYVEKNAQGMITAIHCEYDPETLNKDPSDGRKIRGVIHWVSADDAVPAEIRLYHHLLTASHADTCLFLEAFNPESLFIRQGFVEPSLANTQEGKTYQFEREGYFCTDKDSSEKHLVFNRTVSLRGESALYDL</sequence>
<organism>
    <name type="scientific">Hamiltonella defensa subsp. Acyrthosiphon pisum (strain 5AT)</name>
    <dbReference type="NCBI Taxonomy" id="572265"/>
    <lineage>
        <taxon>Bacteria</taxon>
        <taxon>Pseudomonadati</taxon>
        <taxon>Pseudomonadota</taxon>
        <taxon>Gammaproteobacteria</taxon>
        <taxon>Enterobacterales</taxon>
        <taxon>Enterobacteriaceae</taxon>
        <taxon>aphid secondary symbionts</taxon>
        <taxon>Candidatus Hamiltonella</taxon>
    </lineage>
</organism>
<keyword id="KW-0030">Aminoacyl-tRNA synthetase</keyword>
<keyword id="KW-0067">ATP-binding</keyword>
<keyword id="KW-0963">Cytoplasm</keyword>
<keyword id="KW-0436">Ligase</keyword>
<keyword id="KW-0547">Nucleotide-binding</keyword>
<keyword id="KW-0648">Protein biosynthesis</keyword>
<reference key="1">
    <citation type="journal article" date="2009" name="Proc. Natl. Acad. Sci. U.S.A.">
        <title>Hamiltonella defensa, genome evolution of protective bacterial endosymbiont from pathogenic ancestors.</title>
        <authorList>
            <person name="Degnan P.H."/>
            <person name="Yu Y."/>
            <person name="Sisneros N."/>
            <person name="Wing R.A."/>
            <person name="Moran N.A."/>
        </authorList>
    </citation>
    <scope>NUCLEOTIDE SEQUENCE [LARGE SCALE GENOMIC DNA]</scope>
    <source>
        <strain>5AT</strain>
    </source>
</reference>
<evidence type="ECO:0000255" key="1">
    <source>
        <dbReference type="HAMAP-Rule" id="MF_00126"/>
    </source>
</evidence>
<gene>
    <name evidence="1" type="primary">glnS</name>
    <name type="ordered locus">HDEF_0764</name>
</gene>
<protein>
    <recommendedName>
        <fullName evidence="1">Glutamine--tRNA ligase</fullName>
        <ecNumber evidence="1">6.1.1.18</ecNumber>
    </recommendedName>
    <alternativeName>
        <fullName evidence="1">Glutaminyl-tRNA synthetase</fullName>
        <shortName evidence="1">GlnRS</shortName>
    </alternativeName>
</protein>
<proteinExistence type="inferred from homology"/>
<comment type="catalytic activity">
    <reaction evidence="1">
        <text>tRNA(Gln) + L-glutamine + ATP = L-glutaminyl-tRNA(Gln) + AMP + diphosphate</text>
        <dbReference type="Rhea" id="RHEA:20121"/>
        <dbReference type="Rhea" id="RHEA-COMP:9662"/>
        <dbReference type="Rhea" id="RHEA-COMP:9681"/>
        <dbReference type="ChEBI" id="CHEBI:30616"/>
        <dbReference type="ChEBI" id="CHEBI:33019"/>
        <dbReference type="ChEBI" id="CHEBI:58359"/>
        <dbReference type="ChEBI" id="CHEBI:78442"/>
        <dbReference type="ChEBI" id="CHEBI:78521"/>
        <dbReference type="ChEBI" id="CHEBI:456215"/>
        <dbReference type="EC" id="6.1.1.18"/>
    </reaction>
</comment>
<comment type="subunit">
    <text evidence="1">Monomer.</text>
</comment>
<comment type="subcellular location">
    <subcellularLocation>
        <location evidence="1">Cytoplasm</location>
    </subcellularLocation>
</comment>
<comment type="similarity">
    <text evidence="1">Belongs to the class-I aminoacyl-tRNA synthetase family.</text>
</comment>
<dbReference type="EC" id="6.1.1.18" evidence="1"/>
<dbReference type="EMBL" id="CP001277">
    <property type="protein sequence ID" value="ACQ67492.1"/>
    <property type="molecule type" value="Genomic_DNA"/>
</dbReference>
<dbReference type="RefSeq" id="WP_015873312.1">
    <property type="nucleotide sequence ID" value="NC_012751.1"/>
</dbReference>
<dbReference type="SMR" id="C4K4J9"/>
<dbReference type="STRING" id="572265.HDEF_0764"/>
<dbReference type="GeneID" id="66260606"/>
<dbReference type="KEGG" id="hde:HDEF_0764"/>
<dbReference type="eggNOG" id="COG0008">
    <property type="taxonomic scope" value="Bacteria"/>
</dbReference>
<dbReference type="HOGENOM" id="CLU_001882_2_3_6"/>
<dbReference type="Proteomes" id="UP000002334">
    <property type="component" value="Chromosome"/>
</dbReference>
<dbReference type="GO" id="GO:0005829">
    <property type="term" value="C:cytosol"/>
    <property type="evidence" value="ECO:0007669"/>
    <property type="project" value="TreeGrafter"/>
</dbReference>
<dbReference type="GO" id="GO:0005524">
    <property type="term" value="F:ATP binding"/>
    <property type="evidence" value="ECO:0007669"/>
    <property type="project" value="UniProtKB-UniRule"/>
</dbReference>
<dbReference type="GO" id="GO:0004819">
    <property type="term" value="F:glutamine-tRNA ligase activity"/>
    <property type="evidence" value="ECO:0007669"/>
    <property type="project" value="UniProtKB-UniRule"/>
</dbReference>
<dbReference type="GO" id="GO:0006425">
    <property type="term" value="P:glutaminyl-tRNA aminoacylation"/>
    <property type="evidence" value="ECO:0007669"/>
    <property type="project" value="InterPro"/>
</dbReference>
<dbReference type="GO" id="GO:0006424">
    <property type="term" value="P:glutamyl-tRNA aminoacylation"/>
    <property type="evidence" value="ECO:0007669"/>
    <property type="project" value="UniProtKB-UniRule"/>
</dbReference>
<dbReference type="CDD" id="cd00807">
    <property type="entry name" value="GlnRS_core"/>
    <property type="match status" value="1"/>
</dbReference>
<dbReference type="FunFam" id="1.10.1160.10:FF:000001">
    <property type="entry name" value="Glutamine--tRNA ligase"/>
    <property type="match status" value="1"/>
</dbReference>
<dbReference type="FunFam" id="2.40.240.10:FF:000001">
    <property type="entry name" value="Glutamine--tRNA ligase"/>
    <property type="match status" value="1"/>
</dbReference>
<dbReference type="FunFam" id="3.90.800.10:FF:000001">
    <property type="entry name" value="Glutamine--tRNA ligase"/>
    <property type="match status" value="1"/>
</dbReference>
<dbReference type="FunFam" id="3.40.50.620:FF:000037">
    <property type="entry name" value="Glutamine--tRNA ligase cytoplasmic"/>
    <property type="match status" value="1"/>
</dbReference>
<dbReference type="Gene3D" id="1.10.1160.10">
    <property type="entry name" value="Glutamyl-trna Synthetase, Domain 2"/>
    <property type="match status" value="1"/>
</dbReference>
<dbReference type="Gene3D" id="3.90.800.10">
    <property type="entry name" value="Glutamyl-tRNA Synthetase, Domain 3"/>
    <property type="match status" value="1"/>
</dbReference>
<dbReference type="Gene3D" id="3.40.50.620">
    <property type="entry name" value="HUPs"/>
    <property type="match status" value="1"/>
</dbReference>
<dbReference type="Gene3D" id="2.40.240.10">
    <property type="entry name" value="Ribosomal Protein L25, Chain P"/>
    <property type="match status" value="2"/>
</dbReference>
<dbReference type="HAMAP" id="MF_00126">
    <property type="entry name" value="Gln_tRNA_synth"/>
    <property type="match status" value="1"/>
</dbReference>
<dbReference type="InterPro" id="IPR001412">
    <property type="entry name" value="aa-tRNA-synth_I_CS"/>
</dbReference>
<dbReference type="InterPro" id="IPR004514">
    <property type="entry name" value="Gln-tRNA-synth"/>
</dbReference>
<dbReference type="InterPro" id="IPR050132">
    <property type="entry name" value="Gln/Glu-tRNA_Ligase"/>
</dbReference>
<dbReference type="InterPro" id="IPR022861">
    <property type="entry name" value="Gln_tRNA_ligase_bac"/>
</dbReference>
<dbReference type="InterPro" id="IPR000924">
    <property type="entry name" value="Glu/Gln-tRNA-synth"/>
</dbReference>
<dbReference type="InterPro" id="IPR020058">
    <property type="entry name" value="Glu/Gln-tRNA-synth_Ib_cat-dom"/>
</dbReference>
<dbReference type="InterPro" id="IPR020059">
    <property type="entry name" value="Glu/Gln-tRNA-synth_Ib_codon-bd"/>
</dbReference>
<dbReference type="InterPro" id="IPR020061">
    <property type="entry name" value="Glu_tRNA_lig_a-bdl"/>
</dbReference>
<dbReference type="InterPro" id="IPR020056">
    <property type="entry name" value="Rbsml_bL25/Gln-tRNA_synth_N"/>
</dbReference>
<dbReference type="InterPro" id="IPR011035">
    <property type="entry name" value="Ribosomal_bL25/Gln-tRNA_synth"/>
</dbReference>
<dbReference type="InterPro" id="IPR014729">
    <property type="entry name" value="Rossmann-like_a/b/a_fold"/>
</dbReference>
<dbReference type="InterPro" id="IPR049437">
    <property type="entry name" value="tRNA-synt_1c_C2"/>
</dbReference>
<dbReference type="NCBIfam" id="TIGR00440">
    <property type="entry name" value="glnS"/>
    <property type="match status" value="1"/>
</dbReference>
<dbReference type="NCBIfam" id="NF011291">
    <property type="entry name" value="PRK14703.1"/>
    <property type="match status" value="1"/>
</dbReference>
<dbReference type="PANTHER" id="PTHR43097:SF5">
    <property type="entry name" value="GLUTAMATE--TRNA LIGASE"/>
    <property type="match status" value="1"/>
</dbReference>
<dbReference type="PANTHER" id="PTHR43097">
    <property type="entry name" value="GLUTAMINE-TRNA LIGASE"/>
    <property type="match status" value="1"/>
</dbReference>
<dbReference type="Pfam" id="PF00749">
    <property type="entry name" value="tRNA-synt_1c"/>
    <property type="match status" value="1"/>
</dbReference>
<dbReference type="Pfam" id="PF03950">
    <property type="entry name" value="tRNA-synt_1c_C"/>
    <property type="match status" value="1"/>
</dbReference>
<dbReference type="Pfam" id="PF20974">
    <property type="entry name" value="tRNA-synt_1c_C2"/>
    <property type="match status" value="1"/>
</dbReference>
<dbReference type="PRINTS" id="PR00987">
    <property type="entry name" value="TRNASYNTHGLU"/>
</dbReference>
<dbReference type="SUPFAM" id="SSF52374">
    <property type="entry name" value="Nucleotidylyl transferase"/>
    <property type="match status" value="1"/>
</dbReference>
<dbReference type="SUPFAM" id="SSF50715">
    <property type="entry name" value="Ribosomal protein L25-like"/>
    <property type="match status" value="1"/>
</dbReference>
<dbReference type="PROSITE" id="PS00178">
    <property type="entry name" value="AA_TRNA_LIGASE_I"/>
    <property type="match status" value="1"/>
</dbReference>
<accession>C4K4J9</accession>
<name>SYQ_HAMD5</name>
<feature type="chain" id="PRO_1000203123" description="Glutamine--tRNA ligase">
    <location>
        <begin position="1"/>
        <end position="552"/>
    </location>
</feature>
<feature type="short sequence motif" description="'HIGH' region" evidence="1">
    <location>
        <begin position="34"/>
        <end position="44"/>
    </location>
</feature>
<feature type="short sequence motif" description="'KMSKS' region" evidence="1">
    <location>
        <begin position="268"/>
        <end position="272"/>
    </location>
</feature>
<feature type="binding site" evidence="1">
    <location>
        <begin position="35"/>
        <end position="37"/>
    </location>
    <ligand>
        <name>ATP</name>
        <dbReference type="ChEBI" id="CHEBI:30616"/>
    </ligand>
</feature>
<feature type="binding site" evidence="1">
    <location>
        <begin position="41"/>
        <end position="47"/>
    </location>
    <ligand>
        <name>ATP</name>
        <dbReference type="ChEBI" id="CHEBI:30616"/>
    </ligand>
</feature>
<feature type="binding site" evidence="1">
    <location>
        <position position="67"/>
    </location>
    <ligand>
        <name>L-glutamine</name>
        <dbReference type="ChEBI" id="CHEBI:58359"/>
    </ligand>
</feature>
<feature type="binding site" evidence="1">
    <location>
        <position position="212"/>
    </location>
    <ligand>
        <name>L-glutamine</name>
        <dbReference type="ChEBI" id="CHEBI:58359"/>
    </ligand>
</feature>
<feature type="binding site" evidence="1">
    <location>
        <position position="231"/>
    </location>
    <ligand>
        <name>ATP</name>
        <dbReference type="ChEBI" id="CHEBI:30616"/>
    </ligand>
</feature>
<feature type="binding site" evidence="1">
    <location>
        <begin position="261"/>
        <end position="262"/>
    </location>
    <ligand>
        <name>ATP</name>
        <dbReference type="ChEBI" id="CHEBI:30616"/>
    </ligand>
</feature>
<feature type="binding site" evidence="1">
    <location>
        <begin position="269"/>
        <end position="271"/>
    </location>
    <ligand>
        <name>ATP</name>
        <dbReference type="ChEBI" id="CHEBI:30616"/>
    </ligand>
</feature>